<protein>
    <recommendedName>
        <fullName>Chitin synthase G</fullName>
        <ecNumber>2.4.1.16</ecNumber>
    </recommendedName>
    <alternativeName>
        <fullName>Chitin-UDP acetyl-glucosaminyl transferase G</fullName>
    </alternativeName>
    <alternativeName>
        <fullName>Class-III chitin synthase G</fullName>
    </alternativeName>
</protein>
<keyword id="KW-1003">Cell membrane</keyword>
<keyword id="KW-0961">Cell wall biogenesis/degradation</keyword>
<keyword id="KW-0328">Glycosyltransferase</keyword>
<keyword id="KW-0472">Membrane</keyword>
<keyword id="KW-1185">Reference proteome</keyword>
<keyword id="KW-0808">Transferase</keyword>
<keyword id="KW-0812">Transmembrane</keyword>
<keyword id="KW-1133">Transmembrane helix</keyword>
<sequence length="911" mass="101670">MAYQGSGSHSPPHYDDNGHRLQDLPHGSYEEEASRGLLSHQQGPFTGPFDDPQQHGSSTTRPVSGYSLSETYAPEAAYHDPYTQPSPGSVYSAQSAENPAAAFGVPGRVASPYARSDTSSTEAWRQRQAPGGGPGGLRRYATRKVKLVQGSVLSVDYPVPSAIQNAIQAKYRNDLEGGSEEFTHMRYTAATCDPNEFTLHNGYNLRPAMYNRHTELLIAITYYNEDKTLTSRTLHGVMQNIRDIVNLKKSEFWNKGGPAWQKIVVCLVFDGIDPCDKDTLDVLATIGVYQDGVMKRDVDGKETVAHIFEYTTQLSVTPNQQLIRPTDDGPSTLPPVQMMFCLKQKNSKKINSHRWLFNAFGRILNPEVCILLDAGTKPGPKSLLSLWEAFYNDKDLGGACGEIHAMLGKGWKNLINPLVAAQNFEYKISNILDKPLESSFGYVSVLPGAFSAYRFRAIMGRPLEQYFHGDHTLSKQLGKKGIEGMNIFKKNMFLAEDRILCFELVAKAGSKWHLTYVKASKAETDVPEGAPEFISQRRRWLNGSFAAGIYSLMHFGRMYKSGHNIVRMFFLHIQMLYNIFSTVLTWFSLASYWLTTTVIMDLVGTPSDNNGNKAFPFGKTATPIINTIVKYVYLGFLLLQFILALGNRPKGSKFSYLASFVVFGIIQVYVVIDALYLVVRAFSGSAPMDFTTDQGVGEFLKSFFSSSGAGIIIIALAATFGLYFVASFMYLDPWHMFTSFPAYMCVQSSYINILNVYAFSNWHDVSWGTKGSDKADALPSAKTTKDEGKEVVIEEIDKPQADIDSQFEATVKRALTPYVPPVEKEEKTLEDSYKSFRTRLVTFWIFSNAFLAVCITSDGVDKFGFTNSATDRTQRFFQALLWSNAVVALFRFIGACWFLGKTGLMCCFARR</sequence>
<name>CHSG_ASPFU</name>
<gene>
    <name type="primary">chsG</name>
    <name type="ORF">AFUA_3G14420</name>
</gene>
<accession>P54267</accession>
<accession>Q09031</accession>
<accession>Q09032</accession>
<accession>Q4WYV7</accession>
<evidence type="ECO:0000255" key="1"/>
<evidence type="ECO:0000256" key="2">
    <source>
        <dbReference type="SAM" id="MobiDB-lite"/>
    </source>
</evidence>
<evidence type="ECO:0000269" key="3">
    <source>
    </source>
</evidence>
<evidence type="ECO:0000305" key="4"/>
<organism>
    <name type="scientific">Aspergillus fumigatus (strain ATCC MYA-4609 / CBS 101355 / FGSC A1100 / Af293)</name>
    <name type="common">Neosartorya fumigata</name>
    <dbReference type="NCBI Taxonomy" id="330879"/>
    <lineage>
        <taxon>Eukaryota</taxon>
        <taxon>Fungi</taxon>
        <taxon>Dikarya</taxon>
        <taxon>Ascomycota</taxon>
        <taxon>Pezizomycotina</taxon>
        <taxon>Eurotiomycetes</taxon>
        <taxon>Eurotiomycetidae</taxon>
        <taxon>Eurotiales</taxon>
        <taxon>Aspergillaceae</taxon>
        <taxon>Aspergillus</taxon>
        <taxon>Aspergillus subgen. Fumigati</taxon>
    </lineage>
</organism>
<feature type="chain" id="PRO_0000193682" description="Chitin synthase G">
    <location>
        <begin position="1"/>
        <end position="911"/>
    </location>
</feature>
<feature type="transmembrane region" description="Helical" evidence="1">
    <location>
        <begin position="579"/>
        <end position="599"/>
    </location>
</feature>
<feature type="transmembrane region" description="Helical" evidence="1">
    <location>
        <begin position="624"/>
        <end position="644"/>
    </location>
</feature>
<feature type="transmembrane region" description="Helical" evidence="1">
    <location>
        <begin position="659"/>
        <end position="679"/>
    </location>
</feature>
<feature type="transmembrane region" description="Helical" evidence="1">
    <location>
        <begin position="711"/>
        <end position="731"/>
    </location>
</feature>
<feature type="transmembrane region" description="Helical" evidence="1">
    <location>
        <begin position="840"/>
        <end position="860"/>
    </location>
</feature>
<feature type="transmembrane region" description="Helical" evidence="1">
    <location>
        <begin position="879"/>
        <end position="899"/>
    </location>
</feature>
<feature type="region of interest" description="Disordered" evidence="2">
    <location>
        <begin position="1"/>
        <end position="66"/>
    </location>
</feature>
<feature type="region of interest" description="Disordered" evidence="2">
    <location>
        <begin position="107"/>
        <end position="138"/>
    </location>
</feature>
<feature type="compositionally biased region" description="Basic and acidic residues" evidence="2">
    <location>
        <begin position="12"/>
        <end position="34"/>
    </location>
</feature>
<feature type="compositionally biased region" description="Polar residues" evidence="2">
    <location>
        <begin position="54"/>
        <end position="66"/>
    </location>
</feature>
<feature type="sequence conflict" description="In Ref. 1; CAA63928." evidence="4" ref="1">
    <original>PPVQ</original>
    <variation>LPSK</variation>
    <location>
        <begin position="334"/>
        <end position="337"/>
    </location>
</feature>
<feature type="sequence conflict" description="In Ref. 2; AAB07679." evidence="4" ref="2">
    <original>R</original>
    <variation>C</variation>
    <location>
        <position position="537"/>
    </location>
</feature>
<feature type="sequence conflict" description="In Ref. 2; AAB07679." evidence="4" ref="2">
    <original>IV</original>
    <variation>MM</variation>
    <location>
        <begin position="628"/>
        <end position="629"/>
    </location>
</feature>
<feature type="sequence conflict" description="In Ref. 2; AAB07679." evidence="4" ref="2">
    <original>F</original>
    <variation>N</variation>
    <location>
        <position position="892"/>
    </location>
</feature>
<comment type="function">
    <text evidence="3">Polymerizes chitin, a structural polymer of the cell wall and septum, by transferring the sugar moiety of UDP-GlcNAc to the non-reducing end of the growing chitin polymer.</text>
</comment>
<comment type="catalytic activity">
    <reaction>
        <text>[(1-&gt;4)-N-acetyl-beta-D-glucosaminyl](n) + UDP-N-acetyl-alpha-D-glucosamine = [(1-&gt;4)-N-acetyl-beta-D-glucosaminyl](n+1) + UDP + H(+)</text>
        <dbReference type="Rhea" id="RHEA:16637"/>
        <dbReference type="Rhea" id="RHEA-COMP:9593"/>
        <dbReference type="Rhea" id="RHEA-COMP:9595"/>
        <dbReference type="ChEBI" id="CHEBI:15378"/>
        <dbReference type="ChEBI" id="CHEBI:17029"/>
        <dbReference type="ChEBI" id="CHEBI:57705"/>
        <dbReference type="ChEBI" id="CHEBI:58223"/>
        <dbReference type="EC" id="2.4.1.16"/>
    </reaction>
</comment>
<comment type="subcellular location">
    <subcellularLocation>
        <location evidence="4">Cell membrane</location>
        <topology evidence="1">Multi-pass membrane protein</topology>
    </subcellularLocation>
</comment>
<comment type="similarity">
    <text evidence="4">Belongs to the chitin synthase family. Class III subfamily.</text>
</comment>
<proteinExistence type="evidence at transcript level"/>
<reference key="1">
    <citation type="journal article" date="1996" name="Mol. Microbiol.">
        <title>The Aspergillus fumigatus chsC and chsG genes encode class III chitin synthases with different functions.</title>
        <authorList>
            <person name="Mellado E."/>
            <person name="Aufauvre-Brown A."/>
            <person name="Gow N.A.R."/>
            <person name="Holden D.W."/>
        </authorList>
    </citation>
    <scope>NUCLEOTIDE SEQUENCE [GENOMIC DNA]</scope>
    <source>
        <strain>H237</strain>
    </source>
</reference>
<reference key="2">
    <citation type="journal article" date="1996" name="Fungal Genet. Biol.">
        <title>The chsB gene of Aspergillus nidulans is necessary for normal hyphal growth and development.</title>
        <authorList>
            <person name="Borgia P.T."/>
            <person name="Iartchouk N."/>
            <person name="Riggle P.J."/>
            <person name="Winter K.R."/>
            <person name="Koltin Y."/>
            <person name="Bulawa C.E."/>
        </authorList>
    </citation>
    <scope>NUCLEOTIDE SEQUENCE [GENOMIC DNA / MRNA]</scope>
    <scope>FUNCTION</scope>
    <source>
        <strain>SIU001</strain>
    </source>
</reference>
<reference key="3">
    <citation type="journal article" date="2005" name="Nature">
        <title>Genomic sequence of the pathogenic and allergenic filamentous fungus Aspergillus fumigatus.</title>
        <authorList>
            <person name="Nierman W.C."/>
            <person name="Pain A."/>
            <person name="Anderson M.J."/>
            <person name="Wortman J.R."/>
            <person name="Kim H.S."/>
            <person name="Arroyo J."/>
            <person name="Berriman M."/>
            <person name="Abe K."/>
            <person name="Archer D.B."/>
            <person name="Bermejo C."/>
            <person name="Bennett J.W."/>
            <person name="Bowyer P."/>
            <person name="Chen D."/>
            <person name="Collins M."/>
            <person name="Coulsen R."/>
            <person name="Davies R."/>
            <person name="Dyer P.S."/>
            <person name="Farman M.L."/>
            <person name="Fedorova N."/>
            <person name="Fedorova N.D."/>
            <person name="Feldblyum T.V."/>
            <person name="Fischer R."/>
            <person name="Fosker N."/>
            <person name="Fraser A."/>
            <person name="Garcia J.L."/>
            <person name="Garcia M.J."/>
            <person name="Goble A."/>
            <person name="Goldman G.H."/>
            <person name="Gomi K."/>
            <person name="Griffith-Jones S."/>
            <person name="Gwilliam R."/>
            <person name="Haas B.J."/>
            <person name="Haas H."/>
            <person name="Harris D.E."/>
            <person name="Horiuchi H."/>
            <person name="Huang J."/>
            <person name="Humphray S."/>
            <person name="Jimenez J."/>
            <person name="Keller N."/>
            <person name="Khouri H."/>
            <person name="Kitamoto K."/>
            <person name="Kobayashi T."/>
            <person name="Konzack S."/>
            <person name="Kulkarni R."/>
            <person name="Kumagai T."/>
            <person name="Lafton A."/>
            <person name="Latge J.-P."/>
            <person name="Li W."/>
            <person name="Lord A."/>
            <person name="Lu C."/>
            <person name="Majoros W.H."/>
            <person name="May G.S."/>
            <person name="Miller B.L."/>
            <person name="Mohamoud Y."/>
            <person name="Molina M."/>
            <person name="Monod M."/>
            <person name="Mouyna I."/>
            <person name="Mulligan S."/>
            <person name="Murphy L.D."/>
            <person name="O'Neil S."/>
            <person name="Paulsen I."/>
            <person name="Penalva M.A."/>
            <person name="Pertea M."/>
            <person name="Price C."/>
            <person name="Pritchard B.L."/>
            <person name="Quail M.A."/>
            <person name="Rabbinowitsch E."/>
            <person name="Rawlins N."/>
            <person name="Rajandream M.A."/>
            <person name="Reichard U."/>
            <person name="Renauld H."/>
            <person name="Robson G.D."/>
            <person name="Rodriguez de Cordoba S."/>
            <person name="Rodriguez-Pena J.M."/>
            <person name="Ronning C.M."/>
            <person name="Rutter S."/>
            <person name="Salzberg S.L."/>
            <person name="Sanchez M."/>
            <person name="Sanchez-Ferrero J.C."/>
            <person name="Saunders D."/>
            <person name="Seeger K."/>
            <person name="Squares R."/>
            <person name="Squares S."/>
            <person name="Takeuchi M."/>
            <person name="Tekaia F."/>
            <person name="Turner G."/>
            <person name="Vazquez de Aldana C.R."/>
            <person name="Weidman J."/>
            <person name="White O."/>
            <person name="Woodward J.R."/>
            <person name="Yu J.-H."/>
            <person name="Fraser C.M."/>
            <person name="Galagan J.E."/>
            <person name="Asai K."/>
            <person name="Machida M."/>
            <person name="Hall N."/>
            <person name="Barrell B.G."/>
            <person name="Denning D.W."/>
        </authorList>
    </citation>
    <scope>NUCLEOTIDE SEQUENCE [LARGE SCALE GENOMIC DNA]</scope>
    <source>
        <strain>ATCC MYA-4609 / CBS 101355 / FGSC A1100 / Af293</strain>
    </source>
</reference>
<dbReference type="EC" id="2.4.1.16"/>
<dbReference type="EMBL" id="X94244">
    <property type="protein sequence ID" value="CAA63928.1"/>
    <property type="molecule type" value="Genomic_DNA"/>
</dbReference>
<dbReference type="EMBL" id="U39478">
    <property type="protein sequence ID" value="AAB07678.1"/>
    <property type="molecule type" value="Genomic_DNA"/>
</dbReference>
<dbReference type="EMBL" id="U39479">
    <property type="protein sequence ID" value="AAB07679.1"/>
    <property type="molecule type" value="mRNA"/>
</dbReference>
<dbReference type="EMBL" id="AAHF01000002">
    <property type="protein sequence ID" value="EAL92146.1"/>
    <property type="molecule type" value="Genomic_DNA"/>
</dbReference>
<dbReference type="PIR" id="JC6016">
    <property type="entry name" value="JC6016"/>
</dbReference>
<dbReference type="RefSeq" id="XP_754184.1">
    <property type="nucleotide sequence ID" value="XM_749091.1"/>
</dbReference>
<dbReference type="SMR" id="P54267"/>
<dbReference type="STRING" id="330879.P54267"/>
<dbReference type="CAZy" id="GT2">
    <property type="family name" value="Glycosyltransferase Family 2"/>
</dbReference>
<dbReference type="EnsemblFungi" id="EAL92146">
    <property type="protein sequence ID" value="EAL92146"/>
    <property type="gene ID" value="AFUA_3G14420"/>
</dbReference>
<dbReference type="GeneID" id="3511996"/>
<dbReference type="KEGG" id="afm:AFUA_3G14420"/>
<dbReference type="VEuPathDB" id="FungiDB:Afu3g14420"/>
<dbReference type="eggNOG" id="KOG2571">
    <property type="taxonomic scope" value="Eukaryota"/>
</dbReference>
<dbReference type="HOGENOM" id="CLU_004760_0_1_1"/>
<dbReference type="InParanoid" id="P54267"/>
<dbReference type="OMA" id="WHLTYIK"/>
<dbReference type="OrthoDB" id="26569at2759"/>
<dbReference type="PHI-base" id="PHI:3044"/>
<dbReference type="PHI-base" id="PHI:565"/>
<dbReference type="Proteomes" id="UP000002530">
    <property type="component" value="Chromosome 3"/>
</dbReference>
<dbReference type="GO" id="GO:0071944">
    <property type="term" value="C:cell periphery"/>
    <property type="evidence" value="ECO:0000318"/>
    <property type="project" value="GO_Central"/>
</dbReference>
<dbReference type="GO" id="GO:0030428">
    <property type="term" value="C:cell septum"/>
    <property type="evidence" value="ECO:0000318"/>
    <property type="project" value="GO_Central"/>
</dbReference>
<dbReference type="GO" id="GO:0005886">
    <property type="term" value="C:plasma membrane"/>
    <property type="evidence" value="ECO:0007669"/>
    <property type="project" value="UniProtKB-SubCell"/>
</dbReference>
<dbReference type="GO" id="GO:0004100">
    <property type="term" value="F:chitin synthase activity"/>
    <property type="evidence" value="ECO:0000318"/>
    <property type="project" value="GO_Central"/>
</dbReference>
<dbReference type="GO" id="GO:0071555">
    <property type="term" value="P:cell wall organization"/>
    <property type="evidence" value="ECO:0007669"/>
    <property type="project" value="UniProtKB-KW"/>
</dbReference>
<dbReference type="GO" id="GO:0006031">
    <property type="term" value="P:chitin biosynthetic process"/>
    <property type="evidence" value="ECO:0000318"/>
    <property type="project" value="GO_Central"/>
</dbReference>
<dbReference type="GO" id="GO:0048315">
    <property type="term" value="P:conidium formation"/>
    <property type="evidence" value="ECO:0000315"/>
    <property type="project" value="AspGD"/>
</dbReference>
<dbReference type="GO" id="GO:0030448">
    <property type="term" value="P:hyphal growth"/>
    <property type="evidence" value="ECO:0000315"/>
    <property type="project" value="AspGD"/>
</dbReference>
<dbReference type="CDD" id="cd04190">
    <property type="entry name" value="Chitin_synth_C"/>
    <property type="match status" value="1"/>
</dbReference>
<dbReference type="InterPro" id="IPR004835">
    <property type="entry name" value="Chitin_synth"/>
</dbReference>
<dbReference type="InterPro" id="IPR004834">
    <property type="entry name" value="Chitin_synth_fun"/>
</dbReference>
<dbReference type="InterPro" id="IPR013616">
    <property type="entry name" value="Chitin_synth_N"/>
</dbReference>
<dbReference type="InterPro" id="IPR029044">
    <property type="entry name" value="Nucleotide-diphossugar_trans"/>
</dbReference>
<dbReference type="PANTHER" id="PTHR22914">
    <property type="entry name" value="CHITIN SYNTHASE"/>
    <property type="match status" value="1"/>
</dbReference>
<dbReference type="PANTHER" id="PTHR22914:SF11">
    <property type="entry name" value="CHITIN SYNTHASE B"/>
    <property type="match status" value="1"/>
</dbReference>
<dbReference type="Pfam" id="PF01644">
    <property type="entry name" value="Chitin_synth_1"/>
    <property type="match status" value="1"/>
</dbReference>
<dbReference type="Pfam" id="PF08407">
    <property type="entry name" value="Chitin_synth_1N"/>
    <property type="match status" value="1"/>
</dbReference>
<dbReference type="SUPFAM" id="SSF53448">
    <property type="entry name" value="Nucleotide-diphospho-sugar transferases"/>
    <property type="match status" value="1"/>
</dbReference>